<accession>Q9UYU5</accession>
<accession>G8ZHL9</accession>
<evidence type="ECO:0000250" key="1">
    <source>
        <dbReference type="UniProtKB" id="O58308"/>
    </source>
</evidence>
<evidence type="ECO:0000250" key="2">
    <source>
        <dbReference type="UniProtKB" id="Q8U1M0"/>
    </source>
</evidence>
<evidence type="ECO:0000305" key="3"/>
<dbReference type="EC" id="1.8.1.18" evidence="2"/>
<dbReference type="EMBL" id="AJ248287">
    <property type="protein sequence ID" value="CAB50317.1"/>
    <property type="molecule type" value="Genomic_DNA"/>
</dbReference>
<dbReference type="EMBL" id="HE613800">
    <property type="protein sequence ID" value="CCE70856.1"/>
    <property type="molecule type" value="Genomic_DNA"/>
</dbReference>
<dbReference type="PIR" id="H75052">
    <property type="entry name" value="H75052"/>
</dbReference>
<dbReference type="SMR" id="Q9UYU5"/>
<dbReference type="STRING" id="272844.PAB0936"/>
<dbReference type="KEGG" id="pab:PAB0936"/>
<dbReference type="PATRIC" id="fig|272844.11.peg.1501"/>
<dbReference type="eggNOG" id="arCOG01069">
    <property type="taxonomic scope" value="Archaea"/>
</dbReference>
<dbReference type="HOGENOM" id="CLU_003291_1_3_2"/>
<dbReference type="PhylomeDB" id="Q9UYU5"/>
<dbReference type="Proteomes" id="UP000000810">
    <property type="component" value="Chromosome"/>
</dbReference>
<dbReference type="Proteomes" id="UP000009139">
    <property type="component" value="Chromosome"/>
</dbReference>
<dbReference type="GO" id="GO:0050451">
    <property type="term" value="F:CoA-disulfide reductase (NADPH) activity"/>
    <property type="evidence" value="ECO:0007669"/>
    <property type="project" value="InterPro"/>
</dbReference>
<dbReference type="GO" id="GO:0050660">
    <property type="term" value="F:flavin adenine dinucleotide binding"/>
    <property type="evidence" value="ECO:0007669"/>
    <property type="project" value="InterPro"/>
</dbReference>
<dbReference type="GO" id="GO:0050661">
    <property type="term" value="F:NADP binding"/>
    <property type="evidence" value="ECO:0007669"/>
    <property type="project" value="InterPro"/>
</dbReference>
<dbReference type="GO" id="GO:0043914">
    <property type="term" value="F:NADPH:sulfur oxidoreductase activity"/>
    <property type="evidence" value="ECO:0007669"/>
    <property type="project" value="UniProtKB-EC"/>
</dbReference>
<dbReference type="GO" id="GO:0003756">
    <property type="term" value="F:protein disulfide isomerase activity"/>
    <property type="evidence" value="ECO:0007669"/>
    <property type="project" value="InterPro"/>
</dbReference>
<dbReference type="Gene3D" id="3.50.50.60">
    <property type="entry name" value="FAD/NAD(P)-binding domain"/>
    <property type="match status" value="3"/>
</dbReference>
<dbReference type="InterPro" id="IPR017758">
    <property type="entry name" value="CoA_disulphide_reductase"/>
</dbReference>
<dbReference type="InterPro" id="IPR050260">
    <property type="entry name" value="FAD-bd_OxRdtase"/>
</dbReference>
<dbReference type="InterPro" id="IPR036188">
    <property type="entry name" value="FAD/NAD-bd_sf"/>
</dbReference>
<dbReference type="InterPro" id="IPR023753">
    <property type="entry name" value="FAD/NAD-binding_dom"/>
</dbReference>
<dbReference type="InterPro" id="IPR016156">
    <property type="entry name" value="FAD/NAD-linked_Rdtase_dimer_sf"/>
</dbReference>
<dbReference type="InterPro" id="IPR004099">
    <property type="entry name" value="Pyr_nucl-diS_OxRdtase_dimer"/>
</dbReference>
<dbReference type="NCBIfam" id="TIGR03385">
    <property type="entry name" value="CoA_CoA_reduc"/>
    <property type="match status" value="1"/>
</dbReference>
<dbReference type="PANTHER" id="PTHR43429:SF1">
    <property type="entry name" value="NAD(P)H SULFUR OXIDOREDUCTASE (COA-DEPENDENT)"/>
    <property type="match status" value="1"/>
</dbReference>
<dbReference type="PANTHER" id="PTHR43429">
    <property type="entry name" value="PYRIDINE NUCLEOTIDE-DISULFIDE OXIDOREDUCTASE DOMAIN-CONTAINING"/>
    <property type="match status" value="1"/>
</dbReference>
<dbReference type="Pfam" id="PF07992">
    <property type="entry name" value="Pyr_redox_2"/>
    <property type="match status" value="1"/>
</dbReference>
<dbReference type="Pfam" id="PF02852">
    <property type="entry name" value="Pyr_redox_dim"/>
    <property type="match status" value="1"/>
</dbReference>
<dbReference type="PRINTS" id="PR00368">
    <property type="entry name" value="FADPNR"/>
</dbReference>
<dbReference type="PRINTS" id="PR00411">
    <property type="entry name" value="PNDRDTASEI"/>
</dbReference>
<dbReference type="SUPFAM" id="SSF51905">
    <property type="entry name" value="FAD/NAD(P)-binding domain"/>
    <property type="match status" value="1"/>
</dbReference>
<dbReference type="SUPFAM" id="SSF55424">
    <property type="entry name" value="FAD/NAD-linked reductases, dimerisation (C-terminal) domain"/>
    <property type="match status" value="1"/>
</dbReference>
<reference key="1">
    <citation type="journal article" date="2003" name="Mol. Microbiol.">
        <title>An integrated analysis of the genome of the hyperthermophilic archaeon Pyrococcus abyssi.</title>
        <authorList>
            <person name="Cohen G.N."/>
            <person name="Barbe V."/>
            <person name="Flament D."/>
            <person name="Galperin M."/>
            <person name="Heilig R."/>
            <person name="Lecompte O."/>
            <person name="Poch O."/>
            <person name="Prieur D."/>
            <person name="Querellou J."/>
            <person name="Ripp R."/>
            <person name="Thierry J.-C."/>
            <person name="Van der Oost J."/>
            <person name="Weissenbach J."/>
            <person name="Zivanovic Y."/>
            <person name="Forterre P."/>
        </authorList>
    </citation>
    <scope>NUCLEOTIDE SEQUENCE [LARGE SCALE GENOMIC DNA]</scope>
    <source>
        <strain>GE5 / Orsay</strain>
    </source>
</reference>
<reference key="2">
    <citation type="journal article" date="2012" name="Curr. Microbiol.">
        <title>Re-annotation of two hyperthermophilic archaea Pyrococcus abyssi GE5 and Pyrococcus furiosus DSM 3638.</title>
        <authorList>
            <person name="Gao J."/>
            <person name="Wang J."/>
        </authorList>
    </citation>
    <scope>GENOME REANNOTATION</scope>
    <source>
        <strain>GE5 / Orsay</strain>
    </source>
</reference>
<name>NSR_PYRAB</name>
<comment type="function">
    <text evidence="2">Catalyzes the CoA-dependent reduction of elemental sulfur (S(0)) to produce hydrogen sulfide.</text>
</comment>
<comment type="catalytic activity">
    <reaction evidence="2">
        <text>hydrogen sulfide + NADP(+) = sulfur + NADPH</text>
        <dbReference type="Rhea" id="RHEA:36595"/>
        <dbReference type="ChEBI" id="CHEBI:26833"/>
        <dbReference type="ChEBI" id="CHEBI:29919"/>
        <dbReference type="ChEBI" id="CHEBI:57783"/>
        <dbReference type="ChEBI" id="CHEBI:58349"/>
        <dbReference type="EC" id="1.8.1.18"/>
    </reaction>
</comment>
<comment type="catalytic activity">
    <reaction evidence="2">
        <text>hydrogen sulfide + NAD(+) = sulfur + NADH</text>
        <dbReference type="Rhea" id="RHEA:36599"/>
        <dbReference type="ChEBI" id="CHEBI:26833"/>
        <dbReference type="ChEBI" id="CHEBI:29919"/>
        <dbReference type="ChEBI" id="CHEBI:57540"/>
        <dbReference type="ChEBI" id="CHEBI:57945"/>
        <dbReference type="EC" id="1.8.1.18"/>
    </reaction>
</comment>
<comment type="cofactor">
    <cofactor evidence="1">
        <name>FAD</name>
        <dbReference type="ChEBI" id="CHEBI:57692"/>
    </cofactor>
    <text evidence="1">Binds 1 FAD per subunit.</text>
</comment>
<comment type="similarity">
    <text evidence="3">Belongs to the class-III pyridine nucleotide-disulfide oxidoreductase family.</text>
</comment>
<organism>
    <name type="scientific">Pyrococcus abyssi (strain GE5 / Orsay)</name>
    <dbReference type="NCBI Taxonomy" id="272844"/>
    <lineage>
        <taxon>Archaea</taxon>
        <taxon>Methanobacteriati</taxon>
        <taxon>Methanobacteriota</taxon>
        <taxon>Thermococci</taxon>
        <taxon>Thermococcales</taxon>
        <taxon>Thermococcaceae</taxon>
        <taxon>Pyrococcus</taxon>
    </lineage>
</organism>
<keyword id="KW-0274">FAD</keyword>
<keyword id="KW-0285">Flavoprotein</keyword>
<keyword id="KW-0520">NAD</keyword>
<keyword id="KW-0521">NADP</keyword>
<keyword id="KW-0560">Oxidoreductase</keyword>
<keyword id="KW-0676">Redox-active center</keyword>
<sequence>MRVVKVKKTVVIIGGGAAGMSAASRVKRLKPEWDVKVFEATEWVSHAPCGIPYVVEGISPTEKLMHYPPEVFIKKRGIDLHLNAEVIEVDTGYVRVREKDGEKSYEWDYLVFANGASPQVPAIEGVDLKGVFTADLPPDAVAIREYMEKNRVEDVVIVGGGYIGLEMAEAFVAQGKRVTMIVRGERILRRSFDKEVTDIIEEKLKQHVNLRLQEIVLRIEGKDRVEKVVTDAGEYRADLVILATGIKPNIELARQLGVRIGETGAIWTNEKMQTSVENVYAAGDVAETKHVITGRRVWVPLAPPGNKMGYVAGSNIAGKEIHFPGVLGTTVTKFLDVEIGKTGLTETEALKEGYDIRTAFIKASTRPHYYPGGKEIWLKGVVDNETNRLLGVQAVGAEILPRIDAAAAMLMANFTTKDAFFTDLAYAPPFAPVWDPLVVLARVLKF</sequence>
<feature type="chain" id="PRO_0000184697" description="NAD(P)H sulfur oxidoreductase (CoA-dependent)">
    <location>
        <begin position="1"/>
        <end position="446"/>
    </location>
</feature>
<feature type="active site" description="Redox-active" evidence="1">
    <location>
        <position position="49"/>
    </location>
</feature>
<feature type="binding site" evidence="1">
    <location>
        <begin position="17"/>
        <end position="18"/>
    </location>
    <ligand>
        <name>FAD</name>
        <dbReference type="ChEBI" id="CHEBI:57692"/>
    </ligand>
</feature>
<feature type="binding site" evidence="1">
    <location>
        <position position="28"/>
    </location>
    <ligand>
        <name>CoA</name>
        <dbReference type="ChEBI" id="CHEBI:57287"/>
    </ligand>
</feature>
<feature type="binding site" evidence="1">
    <location>
        <begin position="39"/>
        <end position="40"/>
    </location>
    <ligand>
        <name>FAD</name>
        <dbReference type="ChEBI" id="CHEBI:57692"/>
    </ligand>
</feature>
<feature type="binding site" evidence="1">
    <location>
        <begin position="45"/>
        <end position="49"/>
    </location>
    <ligand>
        <name>CoA</name>
        <dbReference type="ChEBI" id="CHEBI:57287"/>
    </ligand>
</feature>
<feature type="binding site" evidence="1">
    <location>
        <begin position="46"/>
        <end position="48"/>
    </location>
    <ligand>
        <name>FAD</name>
        <dbReference type="ChEBI" id="CHEBI:57692"/>
    </ligand>
</feature>
<feature type="binding site" evidence="1">
    <location>
        <begin position="66"/>
        <end position="67"/>
    </location>
    <ligand>
        <name>CoA</name>
        <dbReference type="ChEBI" id="CHEBI:57287"/>
    </ligand>
</feature>
<feature type="binding site" evidence="1">
    <location>
        <position position="76"/>
    </location>
    <ligand>
        <name>CoA</name>
        <dbReference type="ChEBI" id="CHEBI:57287"/>
    </ligand>
</feature>
<feature type="binding site" evidence="1">
    <location>
        <position position="86"/>
    </location>
    <ligand>
        <name>FAD</name>
        <dbReference type="ChEBI" id="CHEBI:57692"/>
    </ligand>
</feature>
<feature type="binding site" evidence="1">
    <location>
        <position position="284"/>
    </location>
    <ligand>
        <name>FAD</name>
        <dbReference type="ChEBI" id="CHEBI:57692"/>
    </ligand>
</feature>
<feature type="binding site" evidence="1">
    <location>
        <position position="302"/>
    </location>
    <ligand>
        <name>FAD</name>
        <dbReference type="ChEBI" id="CHEBI:57692"/>
    </ligand>
</feature>
<feature type="binding site" evidence="1">
    <location>
        <position position="306"/>
    </location>
    <ligand>
        <name>CoA</name>
        <dbReference type="ChEBI" id="CHEBI:57287"/>
    </ligand>
</feature>
<feature type="binding site" evidence="1">
    <location>
        <position position="362"/>
    </location>
    <ligand>
        <name>CoA</name>
        <dbReference type="ChEBI" id="CHEBI:57287"/>
    </ligand>
</feature>
<feature type="binding site" evidence="1">
    <location>
        <position position="426"/>
    </location>
    <ligand>
        <name>FAD</name>
        <dbReference type="ChEBI" id="CHEBI:57692"/>
    </ligand>
</feature>
<feature type="binding site" evidence="1">
    <location>
        <position position="434"/>
    </location>
    <ligand>
        <name>CoA</name>
        <dbReference type="ChEBI" id="CHEBI:57287"/>
    </ligand>
</feature>
<feature type="binding site" evidence="1">
    <location>
        <position position="442"/>
    </location>
    <ligand>
        <name>CoA</name>
        <dbReference type="ChEBI" id="CHEBI:57287"/>
    </ligand>
</feature>
<gene>
    <name type="ordered locus">PYRAB14120</name>
    <name type="ORF">PAB0936</name>
</gene>
<protein>
    <recommendedName>
        <fullName evidence="2">NAD(P)H sulfur oxidoreductase (CoA-dependent)</fullName>
        <shortName evidence="2">NSR</shortName>
        <ecNumber evidence="2">1.8.1.18</ecNumber>
    </recommendedName>
</protein>
<proteinExistence type="inferred from homology"/>